<keyword id="KW-0749">Sporulation</keyword>
<proteinExistence type="inferred from homology"/>
<gene>
    <name evidence="1" type="primary">sspO</name>
    <name type="ordered locus">Bcer98_2265</name>
</gene>
<evidence type="ECO:0000255" key="1">
    <source>
        <dbReference type="HAMAP-Rule" id="MF_00665"/>
    </source>
</evidence>
<evidence type="ECO:0000256" key="2">
    <source>
        <dbReference type="SAM" id="MobiDB-lite"/>
    </source>
</evidence>
<name>SSPO_BACCN</name>
<comment type="subcellular location">
    <subcellularLocation>
        <location evidence="1">Spore core</location>
    </subcellularLocation>
</comment>
<comment type="induction">
    <text evidence="1">Expressed only in the forespore compartment of sporulating cells.</text>
</comment>
<comment type="similarity">
    <text evidence="1">Belongs to the SspO family.</text>
</comment>
<reference key="1">
    <citation type="journal article" date="2008" name="Chem. Biol. Interact.">
        <title>Extending the Bacillus cereus group genomics to putative food-borne pathogens of different toxicity.</title>
        <authorList>
            <person name="Lapidus A."/>
            <person name="Goltsman E."/>
            <person name="Auger S."/>
            <person name="Galleron N."/>
            <person name="Segurens B."/>
            <person name="Dossat C."/>
            <person name="Land M.L."/>
            <person name="Broussolle V."/>
            <person name="Brillard J."/>
            <person name="Guinebretiere M.-H."/>
            <person name="Sanchis V."/>
            <person name="Nguen-the C."/>
            <person name="Lereclus D."/>
            <person name="Richardson P."/>
            <person name="Wincker P."/>
            <person name="Weissenbach J."/>
            <person name="Ehrlich S.D."/>
            <person name="Sorokin A."/>
        </authorList>
    </citation>
    <scope>NUCLEOTIDE SEQUENCE [LARGE SCALE GENOMIC DNA]</scope>
    <source>
        <strain>DSM 22905 / CIP 110041 / 391-98 / NVH 391-98</strain>
    </source>
</reference>
<protein>
    <recommendedName>
        <fullName evidence="1">Small, acid-soluble spore protein O</fullName>
        <shortName evidence="1">SASP O</shortName>
    </recommendedName>
</protein>
<sequence length="49" mass="5384">MGKRKANHIVPGMNAASAQGQGTGYNEEFANEPLTAAQRQNNKKRKKNQ</sequence>
<accession>A7GQV6</accession>
<organism>
    <name type="scientific">Bacillus cytotoxicus (strain DSM 22905 / CIP 110041 / 391-98 / NVH 391-98)</name>
    <dbReference type="NCBI Taxonomy" id="315749"/>
    <lineage>
        <taxon>Bacteria</taxon>
        <taxon>Bacillati</taxon>
        <taxon>Bacillota</taxon>
        <taxon>Bacilli</taxon>
        <taxon>Bacillales</taxon>
        <taxon>Bacillaceae</taxon>
        <taxon>Bacillus</taxon>
        <taxon>Bacillus cereus group</taxon>
    </lineage>
</organism>
<dbReference type="EMBL" id="CP000764">
    <property type="protein sequence ID" value="ABS22514.1"/>
    <property type="molecule type" value="Genomic_DNA"/>
</dbReference>
<dbReference type="RefSeq" id="WP_012094708.1">
    <property type="nucleotide sequence ID" value="NC_009674.1"/>
</dbReference>
<dbReference type="STRING" id="315749.Bcer98_2265"/>
<dbReference type="GeneID" id="33897538"/>
<dbReference type="KEGG" id="bcy:Bcer98_2265"/>
<dbReference type="eggNOG" id="ENOG5033BZS">
    <property type="taxonomic scope" value="Bacteria"/>
</dbReference>
<dbReference type="HOGENOM" id="CLU_206342_0_0_9"/>
<dbReference type="OrthoDB" id="2692139at2"/>
<dbReference type="Proteomes" id="UP000002300">
    <property type="component" value="Chromosome"/>
</dbReference>
<dbReference type="GO" id="GO:0042601">
    <property type="term" value="C:endospore-forming forespore"/>
    <property type="evidence" value="ECO:0007669"/>
    <property type="project" value="InterPro"/>
</dbReference>
<dbReference type="GO" id="GO:0030436">
    <property type="term" value="P:asexual sporulation"/>
    <property type="evidence" value="ECO:0007669"/>
    <property type="project" value="UniProtKB-UniRule"/>
</dbReference>
<dbReference type="GO" id="GO:0030435">
    <property type="term" value="P:sporulation resulting in formation of a cellular spore"/>
    <property type="evidence" value="ECO:0007669"/>
    <property type="project" value="UniProtKB-KW"/>
</dbReference>
<dbReference type="HAMAP" id="MF_00665">
    <property type="entry name" value="SspO"/>
    <property type="match status" value="1"/>
</dbReference>
<dbReference type="InterPro" id="IPR012613">
    <property type="entry name" value="SASP_SspO"/>
</dbReference>
<dbReference type="NCBIfam" id="TIGR02864">
    <property type="entry name" value="spore_sspO"/>
    <property type="match status" value="1"/>
</dbReference>
<dbReference type="Pfam" id="PF08175">
    <property type="entry name" value="SspO"/>
    <property type="match status" value="1"/>
</dbReference>
<feature type="chain" id="PRO_0000329091" description="Small, acid-soluble spore protein O">
    <location>
        <begin position="1"/>
        <end position="49"/>
    </location>
</feature>
<feature type="region of interest" description="Disordered" evidence="2">
    <location>
        <begin position="1"/>
        <end position="49"/>
    </location>
</feature>